<proteinExistence type="inferred from homology"/>
<evidence type="ECO:0000250" key="1"/>
<evidence type="ECO:0000250" key="2">
    <source>
        <dbReference type="UniProtKB" id="P10997"/>
    </source>
</evidence>
<evidence type="ECO:0000250" key="3">
    <source>
        <dbReference type="UniProtKB" id="P12969"/>
    </source>
</evidence>
<evidence type="ECO:0000255" key="4"/>
<evidence type="ECO:0000305" key="5"/>
<name>IAPP_CAVPO</name>
<protein>
    <recommendedName>
        <fullName>Islet amyloid polypeptide</fullName>
        <shortName>IAPP</shortName>
    </recommendedName>
    <alternativeName>
        <fullName>Amylin</fullName>
    </alternativeName>
</protein>
<feature type="signal peptide" evidence="4">
    <location>
        <begin position="1"/>
        <end position="22"/>
    </location>
</feature>
<feature type="propeptide" id="PRO_0000004099" evidence="1">
    <location>
        <begin position="23"/>
        <end position="34"/>
    </location>
</feature>
<feature type="peptide" id="PRO_0000004100" description="Islet amyloid polypeptide">
    <location>
        <begin position="37"/>
        <end position="73"/>
    </location>
</feature>
<feature type="propeptide" id="PRO_0000004101" evidence="1">
    <location>
        <begin position="77"/>
        <end position="92"/>
    </location>
</feature>
<feature type="modified residue" description="Tyrosine amide" evidence="1">
    <location>
        <position position="73"/>
    </location>
</feature>
<feature type="disulfide bond" evidence="3">
    <location>
        <begin position="38"/>
        <end position="43"/>
    </location>
</feature>
<comment type="function">
    <text evidence="2 3">Amylin/IAPP is a glucoregulatory peptide hormone that plays an important role in the regulation of energy homeostasis (By similarity). Selectively inhibits insulin-stimulated glucose utilization and glycogen deposition in muscle, while not affecting adipocyte glucose metabolism. IAPP function is mediated by the CALCR-RAMPs (AMYRs) receptor complexes. Amylin can also bind CALCR receptor in the absence of RAMPs, although it is more selective for AMYRs (By similarity).</text>
</comment>
<comment type="subunit">
    <text evidence="2 3">Can form homodimers. Interacts with IDE and INS. Interaction with INS inhibits homodimerization and fibril formation (By similarity).</text>
</comment>
<comment type="subcellular location">
    <subcellularLocation>
        <location evidence="2">Secreted</location>
    </subcellularLocation>
</comment>
<comment type="domain">
    <text evidence="1">The mature protein is largely unstructured in the absence of a cognate ligand.</text>
</comment>
<comment type="similarity">
    <text evidence="5">Belongs to the calcitonin family.</text>
</comment>
<accession>P12966</accession>
<dbReference type="EMBL" id="M25387">
    <property type="protein sequence ID" value="AAA37040.1"/>
    <property type="molecule type" value="mRNA"/>
</dbReference>
<dbReference type="PIR" id="D33542">
    <property type="entry name" value="D33542"/>
</dbReference>
<dbReference type="RefSeq" id="NP_001166436.1">
    <property type="nucleotide sequence ID" value="NM_001172965.2"/>
</dbReference>
<dbReference type="SMR" id="P12966"/>
<dbReference type="FunCoup" id="P12966">
    <property type="interactions" value="344"/>
</dbReference>
<dbReference type="STRING" id="10141.ENSCPOP00000008717"/>
<dbReference type="Ensembl" id="ENSCPOT00000009798.3">
    <property type="protein sequence ID" value="ENSCPOP00000008717.2"/>
    <property type="gene ID" value="ENSCPOG00000009711.4"/>
</dbReference>
<dbReference type="GeneID" id="100135550"/>
<dbReference type="KEGG" id="cpoc:100135550"/>
<dbReference type="CTD" id="3375"/>
<dbReference type="VEuPathDB" id="HostDB:ENSCPOG00000009711"/>
<dbReference type="eggNOG" id="ENOG502S4AQ">
    <property type="taxonomic scope" value="Eukaryota"/>
</dbReference>
<dbReference type="GeneTree" id="ENSGT00510000048671"/>
<dbReference type="HOGENOM" id="CLU_189304_0_0_1"/>
<dbReference type="InParanoid" id="P12966"/>
<dbReference type="OMA" id="CATQRLT"/>
<dbReference type="OrthoDB" id="5062115at2759"/>
<dbReference type="TreeFam" id="TF330783"/>
<dbReference type="Proteomes" id="UP000005447">
    <property type="component" value="Unassembled WGS sequence"/>
</dbReference>
<dbReference type="Bgee" id="ENSCPOG00000009711">
    <property type="expression patterns" value="Expressed in thyroid gland"/>
</dbReference>
<dbReference type="GO" id="GO:0005615">
    <property type="term" value="C:extracellular space"/>
    <property type="evidence" value="ECO:0007669"/>
    <property type="project" value="Ensembl"/>
</dbReference>
<dbReference type="GO" id="GO:0043025">
    <property type="term" value="C:neuronal cell body"/>
    <property type="evidence" value="ECO:0007669"/>
    <property type="project" value="Ensembl"/>
</dbReference>
<dbReference type="GO" id="GO:0005179">
    <property type="term" value="F:hormone activity"/>
    <property type="evidence" value="ECO:0000250"/>
    <property type="project" value="UniProtKB"/>
</dbReference>
<dbReference type="GO" id="GO:0042802">
    <property type="term" value="F:identical protein binding"/>
    <property type="evidence" value="ECO:0007669"/>
    <property type="project" value="Ensembl"/>
</dbReference>
<dbReference type="GO" id="GO:0048018">
    <property type="term" value="F:receptor ligand activity"/>
    <property type="evidence" value="ECO:0000250"/>
    <property type="project" value="UniProtKB"/>
</dbReference>
<dbReference type="GO" id="GO:0150059">
    <property type="term" value="P:amylin receptor 1 signaling pathway"/>
    <property type="evidence" value="ECO:0007669"/>
    <property type="project" value="Ensembl"/>
</dbReference>
<dbReference type="GO" id="GO:0150060">
    <property type="term" value="P:amylin receptor 2 signaling pathway"/>
    <property type="evidence" value="ECO:0007669"/>
    <property type="project" value="Ensembl"/>
</dbReference>
<dbReference type="GO" id="GO:0150061">
    <property type="term" value="P:amylin receptor 3 signaling pathway"/>
    <property type="evidence" value="ECO:0007669"/>
    <property type="project" value="Ensembl"/>
</dbReference>
<dbReference type="GO" id="GO:0097647">
    <property type="term" value="P:amylin receptor signaling pathway"/>
    <property type="evidence" value="ECO:0000250"/>
    <property type="project" value="UniProtKB"/>
</dbReference>
<dbReference type="GO" id="GO:0045453">
    <property type="term" value="P:bone resorption"/>
    <property type="evidence" value="ECO:0007669"/>
    <property type="project" value="Ensembl"/>
</dbReference>
<dbReference type="GO" id="GO:0045779">
    <property type="term" value="P:negative regulation of bone resorption"/>
    <property type="evidence" value="ECO:0007669"/>
    <property type="project" value="Ensembl"/>
</dbReference>
<dbReference type="GO" id="GO:0045671">
    <property type="term" value="P:negative regulation of osteoclast differentiation"/>
    <property type="evidence" value="ECO:0007669"/>
    <property type="project" value="Ensembl"/>
</dbReference>
<dbReference type="GO" id="GO:0030316">
    <property type="term" value="P:osteoclast differentiation"/>
    <property type="evidence" value="ECO:0007669"/>
    <property type="project" value="Ensembl"/>
</dbReference>
<dbReference type="GO" id="GO:0050850">
    <property type="term" value="P:positive regulation of calcium-mediated signaling"/>
    <property type="evidence" value="ECO:0007669"/>
    <property type="project" value="Ensembl"/>
</dbReference>
<dbReference type="GO" id="GO:0141163">
    <property type="term" value="P:positive regulation of cAMP/PKA signal transduction"/>
    <property type="evidence" value="ECO:0007669"/>
    <property type="project" value="Ensembl"/>
</dbReference>
<dbReference type="GO" id="GO:0019233">
    <property type="term" value="P:sensory perception of pain"/>
    <property type="evidence" value="ECO:0007669"/>
    <property type="project" value="Ensembl"/>
</dbReference>
<dbReference type="Gene3D" id="6.10.250.2190">
    <property type="match status" value="1"/>
</dbReference>
<dbReference type="InterPro" id="IPR021117">
    <property type="entry name" value="Calcitonin-like"/>
</dbReference>
<dbReference type="InterPro" id="IPR021116">
    <property type="entry name" value="Calcitonin/adrenomedullin"/>
</dbReference>
<dbReference type="InterPro" id="IPR018360">
    <property type="entry name" value="Calcitonin_CS"/>
</dbReference>
<dbReference type="InterPro" id="IPR001693">
    <property type="entry name" value="Calcitonin_peptide-like"/>
</dbReference>
<dbReference type="InterPro" id="IPR000443">
    <property type="entry name" value="IAPP"/>
</dbReference>
<dbReference type="PANTHER" id="PTHR10505">
    <property type="entry name" value="CALCITONIN-RELATED"/>
    <property type="match status" value="1"/>
</dbReference>
<dbReference type="PANTHER" id="PTHR10505:SF4">
    <property type="entry name" value="ISLET AMYLOID POLYPEPTIDE"/>
    <property type="match status" value="1"/>
</dbReference>
<dbReference type="Pfam" id="PF00214">
    <property type="entry name" value="Calc_CGRP_IAPP"/>
    <property type="match status" value="1"/>
</dbReference>
<dbReference type="PRINTS" id="PR00818">
    <property type="entry name" value="ISLETAMYLOID"/>
</dbReference>
<dbReference type="SMART" id="SM00113">
    <property type="entry name" value="CALCITONIN"/>
    <property type="match status" value="1"/>
</dbReference>
<dbReference type="PROSITE" id="PS00258">
    <property type="entry name" value="CALCITONIN"/>
    <property type="match status" value="1"/>
</dbReference>
<organism>
    <name type="scientific">Cavia porcellus</name>
    <name type="common">Guinea pig</name>
    <dbReference type="NCBI Taxonomy" id="10141"/>
    <lineage>
        <taxon>Eukaryota</taxon>
        <taxon>Metazoa</taxon>
        <taxon>Chordata</taxon>
        <taxon>Craniata</taxon>
        <taxon>Vertebrata</taxon>
        <taxon>Euteleostomi</taxon>
        <taxon>Mammalia</taxon>
        <taxon>Eutheria</taxon>
        <taxon>Euarchontoglires</taxon>
        <taxon>Glires</taxon>
        <taxon>Rodentia</taxon>
        <taxon>Hystricomorpha</taxon>
        <taxon>Caviidae</taxon>
        <taxon>Cavia</taxon>
    </lineage>
</organism>
<reference key="1">
    <citation type="journal article" date="1989" name="Proc. Natl. Acad. Sci. U.S.A.">
        <title>Conservation of the sequence of islet amyloid polypeptide in five mammals is consistent with its putative role as an islet hormone.</title>
        <authorList>
            <person name="Nishi M."/>
            <person name="Chan S.J."/>
            <person name="Nagamatsu S."/>
            <person name="Bell G.I."/>
            <person name="Steiner D.F."/>
        </authorList>
    </citation>
    <scope>NUCLEOTIDE SEQUENCE [MRNA]</scope>
</reference>
<sequence length="92" mass="9989">MCLLRLPVTLLVLCVALNELKATSIASDTGHQVGKRKCNTATCATQRLTNFLVRSSHNLGAALLPTDVGSNTYGKRNAPQISDRELLHYLPL</sequence>
<keyword id="KW-0027">Amidation</keyword>
<keyword id="KW-0034">Amyloid</keyword>
<keyword id="KW-0165">Cleavage on pair of basic residues</keyword>
<keyword id="KW-1015">Disulfide bond</keyword>
<keyword id="KW-0372">Hormone</keyword>
<keyword id="KW-1185">Reference proteome</keyword>
<keyword id="KW-0964">Secreted</keyword>
<keyword id="KW-0732">Signal</keyword>
<gene>
    <name type="primary">IAPP</name>
</gene>